<evidence type="ECO:0000250" key="1">
    <source>
        <dbReference type="UniProtKB" id="Q80ZQ9"/>
    </source>
</evidence>
<evidence type="ECO:0000305" key="2"/>
<accession>Q54TD9</accession>
<name>ABITM_DICDI</name>
<sequence length="175" mass="20027">MRTLIERYYSQYYFIDTTITDPNLTEDQYVNQHTNELAVIGVAPSHPVLQQEISKIEFKENAINNEVSGVRKTGGFKLQSNTILCVITCSNGKEYFLRSCIKGKLLEINKELINNPSLLKTNHATSGFLAIVEPMIKDKFMENPGLIKFEEYHKLRNIPIQKGPVFLKDNTNDED</sequence>
<gene>
    <name type="primary">abitram</name>
    <name type="ORF">DDB_G0281837</name>
</gene>
<proteinExistence type="inferred from homology"/>
<reference key="1">
    <citation type="journal article" date="2005" name="Nature">
        <title>The genome of the social amoeba Dictyostelium discoideum.</title>
        <authorList>
            <person name="Eichinger L."/>
            <person name="Pachebat J.A."/>
            <person name="Gloeckner G."/>
            <person name="Rajandream M.A."/>
            <person name="Sucgang R."/>
            <person name="Berriman M."/>
            <person name="Song J."/>
            <person name="Olsen R."/>
            <person name="Szafranski K."/>
            <person name="Xu Q."/>
            <person name="Tunggal B."/>
            <person name="Kummerfeld S."/>
            <person name="Madera M."/>
            <person name="Konfortov B.A."/>
            <person name="Rivero F."/>
            <person name="Bankier A.T."/>
            <person name="Lehmann R."/>
            <person name="Hamlin N."/>
            <person name="Davies R."/>
            <person name="Gaudet P."/>
            <person name="Fey P."/>
            <person name="Pilcher K."/>
            <person name="Chen G."/>
            <person name="Saunders D."/>
            <person name="Sodergren E.J."/>
            <person name="Davis P."/>
            <person name="Kerhornou A."/>
            <person name="Nie X."/>
            <person name="Hall N."/>
            <person name="Anjard C."/>
            <person name="Hemphill L."/>
            <person name="Bason N."/>
            <person name="Farbrother P."/>
            <person name="Desany B."/>
            <person name="Just E."/>
            <person name="Morio T."/>
            <person name="Rost R."/>
            <person name="Churcher C.M."/>
            <person name="Cooper J."/>
            <person name="Haydock S."/>
            <person name="van Driessche N."/>
            <person name="Cronin A."/>
            <person name="Goodhead I."/>
            <person name="Muzny D.M."/>
            <person name="Mourier T."/>
            <person name="Pain A."/>
            <person name="Lu M."/>
            <person name="Harper D."/>
            <person name="Lindsay R."/>
            <person name="Hauser H."/>
            <person name="James K.D."/>
            <person name="Quiles M."/>
            <person name="Madan Babu M."/>
            <person name="Saito T."/>
            <person name="Buchrieser C."/>
            <person name="Wardroper A."/>
            <person name="Felder M."/>
            <person name="Thangavelu M."/>
            <person name="Johnson D."/>
            <person name="Knights A."/>
            <person name="Loulseged H."/>
            <person name="Mungall K.L."/>
            <person name="Oliver K."/>
            <person name="Price C."/>
            <person name="Quail M.A."/>
            <person name="Urushihara H."/>
            <person name="Hernandez J."/>
            <person name="Rabbinowitsch E."/>
            <person name="Steffen D."/>
            <person name="Sanders M."/>
            <person name="Ma J."/>
            <person name="Kohara Y."/>
            <person name="Sharp S."/>
            <person name="Simmonds M.N."/>
            <person name="Spiegler S."/>
            <person name="Tivey A."/>
            <person name="Sugano S."/>
            <person name="White B."/>
            <person name="Walker D."/>
            <person name="Woodward J.R."/>
            <person name="Winckler T."/>
            <person name="Tanaka Y."/>
            <person name="Shaulsky G."/>
            <person name="Schleicher M."/>
            <person name="Weinstock G.M."/>
            <person name="Rosenthal A."/>
            <person name="Cox E.C."/>
            <person name="Chisholm R.L."/>
            <person name="Gibbs R.A."/>
            <person name="Loomis W.F."/>
            <person name="Platzer M."/>
            <person name="Kay R.R."/>
            <person name="Williams J.G."/>
            <person name="Dear P.H."/>
            <person name="Noegel A.A."/>
            <person name="Barrell B.G."/>
            <person name="Kuspa A."/>
        </authorList>
    </citation>
    <scope>NUCLEOTIDE SEQUENCE [LARGE SCALE GENOMIC DNA]</scope>
    <source>
        <strain>AX4</strain>
    </source>
</reference>
<comment type="function">
    <text evidence="1">May regulate actin polymerization.</text>
</comment>
<comment type="similarity">
    <text evidence="2">Belongs to the ABITRAM family.</text>
</comment>
<keyword id="KW-1185">Reference proteome</keyword>
<organism>
    <name type="scientific">Dictyostelium discoideum</name>
    <name type="common">Social amoeba</name>
    <dbReference type="NCBI Taxonomy" id="44689"/>
    <lineage>
        <taxon>Eukaryota</taxon>
        <taxon>Amoebozoa</taxon>
        <taxon>Evosea</taxon>
        <taxon>Eumycetozoa</taxon>
        <taxon>Dictyostelia</taxon>
        <taxon>Dictyosteliales</taxon>
        <taxon>Dictyosteliaceae</taxon>
        <taxon>Dictyostelium</taxon>
    </lineage>
</organism>
<dbReference type="EMBL" id="AAFI02000043">
    <property type="protein sequence ID" value="EAL66478.1"/>
    <property type="molecule type" value="Genomic_DNA"/>
</dbReference>
<dbReference type="RefSeq" id="XP_640450.1">
    <property type="nucleotide sequence ID" value="XM_635358.1"/>
</dbReference>
<dbReference type="SMR" id="Q54TD9"/>
<dbReference type="FunCoup" id="Q54TD9">
    <property type="interactions" value="478"/>
</dbReference>
<dbReference type="STRING" id="44689.Q54TD9"/>
<dbReference type="PaxDb" id="44689-DDB0204238"/>
<dbReference type="EnsemblProtists" id="EAL66478">
    <property type="protein sequence ID" value="EAL66478"/>
    <property type="gene ID" value="DDB_G0281837"/>
</dbReference>
<dbReference type="GeneID" id="8623263"/>
<dbReference type="KEGG" id="ddi:DDB_G0281837"/>
<dbReference type="dictyBase" id="DDB_G0281837"/>
<dbReference type="VEuPathDB" id="AmoebaDB:DDB_G0281837"/>
<dbReference type="eggNOG" id="KOG3266">
    <property type="taxonomic scope" value="Eukaryota"/>
</dbReference>
<dbReference type="HOGENOM" id="CLU_107323_1_0_1"/>
<dbReference type="InParanoid" id="Q54TD9"/>
<dbReference type="OMA" id="GKACEDH"/>
<dbReference type="PhylomeDB" id="Q54TD9"/>
<dbReference type="PRO" id="PR:Q54TD9"/>
<dbReference type="Proteomes" id="UP000002195">
    <property type="component" value="Chromosome 3"/>
</dbReference>
<dbReference type="GO" id="GO:0005634">
    <property type="term" value="C:nucleus"/>
    <property type="evidence" value="ECO:0000318"/>
    <property type="project" value="GO_Central"/>
</dbReference>
<dbReference type="Gene3D" id="2.40.50.100">
    <property type="match status" value="1"/>
</dbReference>
<dbReference type="InterPro" id="IPR039169">
    <property type="entry name" value="Abitram"/>
</dbReference>
<dbReference type="InterPro" id="IPR011053">
    <property type="entry name" value="Single_hybrid_motif"/>
</dbReference>
<dbReference type="PANTHER" id="PTHR13651">
    <property type="entry name" value="PROTEIN ABITRAM"/>
    <property type="match status" value="1"/>
</dbReference>
<dbReference type="PANTHER" id="PTHR13651:SF0">
    <property type="entry name" value="PROTEIN ABITRAM"/>
    <property type="match status" value="1"/>
</dbReference>
<dbReference type="SUPFAM" id="SSF51230">
    <property type="entry name" value="Single hybrid motif"/>
    <property type="match status" value="1"/>
</dbReference>
<feature type="chain" id="PRO_0000330827" description="Protein Abitram">
    <location>
        <begin position="1"/>
        <end position="175"/>
    </location>
</feature>
<protein>
    <recommendedName>
        <fullName evidence="2">Protein Abitram</fullName>
    </recommendedName>
    <alternativeName>
        <fullName>Actin-binding transcription modulator</fullName>
    </alternativeName>
</protein>